<name>YOBD_SHISS</name>
<comment type="subcellular location">
    <subcellularLocation>
        <location evidence="1">Cell inner membrane</location>
        <topology evidence="1">Multi-pass membrane protein</topology>
    </subcellularLocation>
</comment>
<comment type="similarity">
    <text evidence="1">Belongs to the UPF0266 family.</text>
</comment>
<dbReference type="EMBL" id="CP000038">
    <property type="protein sequence ID" value="AAZ88051.1"/>
    <property type="molecule type" value="Genomic_DNA"/>
</dbReference>
<dbReference type="RefSeq" id="WP_000156255.1">
    <property type="nucleotide sequence ID" value="NC_007384.1"/>
</dbReference>
<dbReference type="KEGG" id="ssn:SSON_1340"/>
<dbReference type="HOGENOM" id="CLU_133645_0_0_6"/>
<dbReference type="Proteomes" id="UP000002529">
    <property type="component" value="Chromosome"/>
</dbReference>
<dbReference type="GO" id="GO:0005886">
    <property type="term" value="C:plasma membrane"/>
    <property type="evidence" value="ECO:0007669"/>
    <property type="project" value="UniProtKB-SubCell"/>
</dbReference>
<dbReference type="HAMAP" id="MF_01071">
    <property type="entry name" value="UPF0266"/>
    <property type="match status" value="1"/>
</dbReference>
<dbReference type="InterPro" id="IPR009328">
    <property type="entry name" value="DUF986"/>
</dbReference>
<dbReference type="NCBIfam" id="NF002791">
    <property type="entry name" value="PRK02913.1"/>
    <property type="match status" value="1"/>
</dbReference>
<dbReference type="Pfam" id="PF06173">
    <property type="entry name" value="DUF986"/>
    <property type="match status" value="1"/>
</dbReference>
<dbReference type="PIRSF" id="PIRSF020687">
    <property type="entry name" value="UCP020687"/>
    <property type="match status" value="1"/>
</dbReference>
<keyword id="KW-0997">Cell inner membrane</keyword>
<keyword id="KW-1003">Cell membrane</keyword>
<keyword id="KW-0472">Membrane</keyword>
<keyword id="KW-1185">Reference proteome</keyword>
<keyword id="KW-0812">Transmembrane</keyword>
<keyword id="KW-1133">Transmembrane helix</keyword>
<proteinExistence type="inferred from homology"/>
<protein>
    <recommendedName>
        <fullName evidence="1">UPF0266 membrane protein YobD</fullName>
    </recommendedName>
</protein>
<gene>
    <name evidence="1" type="primary">yobD</name>
    <name type="ordered locus">SSON_1340</name>
</gene>
<feature type="chain" id="PRO_1000064594" description="UPF0266 membrane protein YobD">
    <location>
        <begin position="1"/>
        <end position="152"/>
    </location>
</feature>
<feature type="transmembrane region" description="Helical" evidence="1">
    <location>
        <begin position="6"/>
        <end position="26"/>
    </location>
</feature>
<feature type="transmembrane region" description="Helical" evidence="1">
    <location>
        <begin position="45"/>
        <end position="65"/>
    </location>
</feature>
<feature type="transmembrane region" description="Helical" evidence="1">
    <location>
        <begin position="67"/>
        <end position="87"/>
    </location>
</feature>
<accession>Q3Z2G1</accession>
<reference key="1">
    <citation type="journal article" date="2005" name="Nucleic Acids Res.">
        <title>Genome dynamics and diversity of Shigella species, the etiologic agents of bacillary dysentery.</title>
        <authorList>
            <person name="Yang F."/>
            <person name="Yang J."/>
            <person name="Zhang X."/>
            <person name="Chen L."/>
            <person name="Jiang Y."/>
            <person name="Yan Y."/>
            <person name="Tang X."/>
            <person name="Wang J."/>
            <person name="Xiong Z."/>
            <person name="Dong J."/>
            <person name="Xue Y."/>
            <person name="Zhu Y."/>
            <person name="Xu X."/>
            <person name="Sun L."/>
            <person name="Chen S."/>
            <person name="Nie H."/>
            <person name="Peng J."/>
            <person name="Xu J."/>
            <person name="Wang Y."/>
            <person name="Yuan Z."/>
            <person name="Wen Y."/>
            <person name="Yao Z."/>
            <person name="Shen Y."/>
            <person name="Qiang B."/>
            <person name="Hou Y."/>
            <person name="Yu J."/>
            <person name="Jin Q."/>
        </authorList>
    </citation>
    <scope>NUCLEOTIDE SEQUENCE [LARGE SCALE GENOMIC DNA]</scope>
    <source>
        <strain>Ss046</strain>
    </source>
</reference>
<evidence type="ECO:0000255" key="1">
    <source>
        <dbReference type="HAMAP-Rule" id="MF_01071"/>
    </source>
</evidence>
<organism>
    <name type="scientific">Shigella sonnei (strain Ss046)</name>
    <dbReference type="NCBI Taxonomy" id="300269"/>
    <lineage>
        <taxon>Bacteria</taxon>
        <taxon>Pseudomonadati</taxon>
        <taxon>Pseudomonadota</taxon>
        <taxon>Gammaproteobacteria</taxon>
        <taxon>Enterobacterales</taxon>
        <taxon>Enterobacteriaceae</taxon>
        <taxon>Shigella</taxon>
    </lineage>
</organism>
<sequence length="152" mass="17615">MTITDLVLILFIAALLAFAIYDQFIMPRRNGPTLLAIPLLRRGRIDSVIFVGLIVILIYNNVTNHGALITTWLLSALALMGFYIFWIRVPKIIFKQKGFFFANVWIEYSRIKAMNLSEDGVLVMQLEQRRLLIRVRNIDDLEKIYKLLVSTQ</sequence>